<accession>B2TII2</accession>
<feature type="chain" id="PRO_1000142948" description="Large ribosomal subunit protein uL16">
    <location>
        <begin position="1"/>
        <end position="144"/>
    </location>
</feature>
<protein>
    <recommendedName>
        <fullName evidence="1">Large ribosomal subunit protein uL16</fullName>
    </recommendedName>
    <alternativeName>
        <fullName evidence="2">50S ribosomal protein L16</fullName>
    </alternativeName>
</protein>
<evidence type="ECO:0000255" key="1">
    <source>
        <dbReference type="HAMAP-Rule" id="MF_01342"/>
    </source>
</evidence>
<evidence type="ECO:0000305" key="2"/>
<name>RL16_CLOBB</name>
<proteinExistence type="inferred from homology"/>
<comment type="function">
    <text evidence="1">Binds 23S rRNA and is also seen to make contacts with the A and possibly P site tRNAs.</text>
</comment>
<comment type="subunit">
    <text evidence="1">Part of the 50S ribosomal subunit.</text>
</comment>
<comment type="similarity">
    <text evidence="1">Belongs to the universal ribosomal protein uL16 family.</text>
</comment>
<reference key="1">
    <citation type="submission" date="2008-04" db="EMBL/GenBank/DDBJ databases">
        <title>Complete sequence of Clostridium botulinum strain Eklund.</title>
        <authorList>
            <person name="Brinkac L.M."/>
            <person name="Brown J.L."/>
            <person name="Bruce D."/>
            <person name="Detter C."/>
            <person name="Munk C."/>
            <person name="Smith L.A."/>
            <person name="Smith T.J."/>
            <person name="Sutton G."/>
            <person name="Brettin T.S."/>
        </authorList>
    </citation>
    <scope>NUCLEOTIDE SEQUENCE [LARGE SCALE GENOMIC DNA]</scope>
    <source>
        <strain>Eklund 17B / Type B</strain>
    </source>
</reference>
<gene>
    <name evidence="1" type="primary">rplP</name>
    <name type="ordered locus">CLL_A0245</name>
</gene>
<dbReference type="EMBL" id="CP001056">
    <property type="protein sequence ID" value="ACD24631.1"/>
    <property type="molecule type" value="Genomic_DNA"/>
</dbReference>
<dbReference type="SMR" id="B2TII2"/>
<dbReference type="KEGG" id="cbk:CLL_A0245"/>
<dbReference type="PATRIC" id="fig|935198.13.peg.220"/>
<dbReference type="HOGENOM" id="CLU_078858_2_1_9"/>
<dbReference type="Proteomes" id="UP000001195">
    <property type="component" value="Chromosome"/>
</dbReference>
<dbReference type="GO" id="GO:0022625">
    <property type="term" value="C:cytosolic large ribosomal subunit"/>
    <property type="evidence" value="ECO:0007669"/>
    <property type="project" value="TreeGrafter"/>
</dbReference>
<dbReference type="GO" id="GO:0019843">
    <property type="term" value="F:rRNA binding"/>
    <property type="evidence" value="ECO:0007669"/>
    <property type="project" value="UniProtKB-UniRule"/>
</dbReference>
<dbReference type="GO" id="GO:0003735">
    <property type="term" value="F:structural constituent of ribosome"/>
    <property type="evidence" value="ECO:0007669"/>
    <property type="project" value="InterPro"/>
</dbReference>
<dbReference type="GO" id="GO:0000049">
    <property type="term" value="F:tRNA binding"/>
    <property type="evidence" value="ECO:0007669"/>
    <property type="project" value="UniProtKB-KW"/>
</dbReference>
<dbReference type="GO" id="GO:0006412">
    <property type="term" value="P:translation"/>
    <property type="evidence" value="ECO:0007669"/>
    <property type="project" value="UniProtKB-UniRule"/>
</dbReference>
<dbReference type="CDD" id="cd01433">
    <property type="entry name" value="Ribosomal_L16_L10e"/>
    <property type="match status" value="1"/>
</dbReference>
<dbReference type="FunFam" id="3.90.1170.10:FF:000001">
    <property type="entry name" value="50S ribosomal protein L16"/>
    <property type="match status" value="1"/>
</dbReference>
<dbReference type="Gene3D" id="3.90.1170.10">
    <property type="entry name" value="Ribosomal protein L10e/L16"/>
    <property type="match status" value="1"/>
</dbReference>
<dbReference type="HAMAP" id="MF_01342">
    <property type="entry name" value="Ribosomal_uL16"/>
    <property type="match status" value="1"/>
</dbReference>
<dbReference type="InterPro" id="IPR047873">
    <property type="entry name" value="Ribosomal_uL16"/>
</dbReference>
<dbReference type="InterPro" id="IPR000114">
    <property type="entry name" value="Ribosomal_uL16_bact-type"/>
</dbReference>
<dbReference type="InterPro" id="IPR020798">
    <property type="entry name" value="Ribosomal_uL16_CS"/>
</dbReference>
<dbReference type="InterPro" id="IPR016180">
    <property type="entry name" value="Ribosomal_uL16_dom"/>
</dbReference>
<dbReference type="InterPro" id="IPR036920">
    <property type="entry name" value="Ribosomal_uL16_sf"/>
</dbReference>
<dbReference type="NCBIfam" id="TIGR01164">
    <property type="entry name" value="rplP_bact"/>
    <property type="match status" value="1"/>
</dbReference>
<dbReference type="PANTHER" id="PTHR12220">
    <property type="entry name" value="50S/60S RIBOSOMAL PROTEIN L16"/>
    <property type="match status" value="1"/>
</dbReference>
<dbReference type="PANTHER" id="PTHR12220:SF13">
    <property type="entry name" value="LARGE RIBOSOMAL SUBUNIT PROTEIN UL16M"/>
    <property type="match status" value="1"/>
</dbReference>
<dbReference type="Pfam" id="PF00252">
    <property type="entry name" value="Ribosomal_L16"/>
    <property type="match status" value="1"/>
</dbReference>
<dbReference type="PRINTS" id="PR00060">
    <property type="entry name" value="RIBOSOMALL16"/>
</dbReference>
<dbReference type="SUPFAM" id="SSF54686">
    <property type="entry name" value="Ribosomal protein L16p/L10e"/>
    <property type="match status" value="1"/>
</dbReference>
<dbReference type="PROSITE" id="PS00586">
    <property type="entry name" value="RIBOSOMAL_L16_1"/>
    <property type="match status" value="1"/>
</dbReference>
<dbReference type="PROSITE" id="PS00701">
    <property type="entry name" value="RIBOSOMAL_L16_2"/>
    <property type="match status" value="1"/>
</dbReference>
<sequence length="144" mass="16380">MLMPKRVKHRKVQRGRMKGRATRGNFLAYGDFGLQATTCGWITSNQIEAARIAINRYIKRGGKLWIKIFPDKPVTEKPAETRMGSGKGSPEYWVAVVKPDRVVFELSGVTEDVAREAMRLASHKLPVRTKFVTRRDFEEMGGEK</sequence>
<keyword id="KW-0687">Ribonucleoprotein</keyword>
<keyword id="KW-0689">Ribosomal protein</keyword>
<keyword id="KW-0694">RNA-binding</keyword>
<keyword id="KW-0699">rRNA-binding</keyword>
<keyword id="KW-0820">tRNA-binding</keyword>
<organism>
    <name type="scientific">Clostridium botulinum (strain Eklund 17B / Type B)</name>
    <dbReference type="NCBI Taxonomy" id="935198"/>
    <lineage>
        <taxon>Bacteria</taxon>
        <taxon>Bacillati</taxon>
        <taxon>Bacillota</taxon>
        <taxon>Clostridia</taxon>
        <taxon>Eubacteriales</taxon>
        <taxon>Clostridiaceae</taxon>
        <taxon>Clostridium</taxon>
    </lineage>
</organism>